<dbReference type="EMBL" id="S73496">
    <property type="protein sequence ID" value="AAC60698.1"/>
    <property type="molecule type" value="mRNA"/>
</dbReference>
<dbReference type="EMBL" id="S73495">
    <property type="protein sequence ID" value="AAC60697.1"/>
    <property type="molecule type" value="mRNA"/>
</dbReference>
<dbReference type="EMBL" id="D26177">
    <property type="protein sequence ID" value="BAA05165.1"/>
    <property type="molecule type" value="mRNA"/>
</dbReference>
<dbReference type="EMBL" id="D17444">
    <property type="protein sequence ID" value="BAA04258.1"/>
    <property type="molecule type" value="mRNA"/>
</dbReference>
<dbReference type="EMBL" id="BC031929">
    <property type="protein sequence ID" value="AAH31929.1"/>
    <property type="molecule type" value="mRNA"/>
</dbReference>
<dbReference type="CCDS" id="CCDS27369.1">
    <molecule id="P42703-1"/>
</dbReference>
<dbReference type="CCDS" id="CCDS49577.1">
    <molecule id="P42703-2"/>
</dbReference>
<dbReference type="PIR" id="JX0312">
    <property type="entry name" value="JX0312"/>
</dbReference>
<dbReference type="RefSeq" id="NP_001106857.1">
    <molecule id="P42703-2"/>
    <property type="nucleotide sequence ID" value="NM_001113386.1"/>
</dbReference>
<dbReference type="RefSeq" id="NP_001345522.1">
    <molecule id="P42703-1"/>
    <property type="nucleotide sequence ID" value="NM_001358593.1"/>
</dbReference>
<dbReference type="RefSeq" id="NP_038612.1">
    <molecule id="P42703-1"/>
    <property type="nucleotide sequence ID" value="NM_013584.2"/>
</dbReference>
<dbReference type="RefSeq" id="XP_006520030.1">
    <property type="nucleotide sequence ID" value="XM_006519967.3"/>
</dbReference>
<dbReference type="RefSeq" id="XP_006520032.1">
    <molecule id="P42703-1"/>
    <property type="nucleotide sequence ID" value="XM_006519969.4"/>
</dbReference>
<dbReference type="RefSeq" id="XP_006520033.1">
    <molecule id="P42703-2"/>
    <property type="nucleotide sequence ID" value="XM_006519970.5"/>
</dbReference>
<dbReference type="RefSeq" id="XP_006520034.1">
    <molecule id="P42703-2"/>
    <property type="nucleotide sequence ID" value="XM_006519971.2"/>
</dbReference>
<dbReference type="RefSeq" id="XP_011243628.1">
    <molecule id="P42703-1"/>
    <property type="nucleotide sequence ID" value="XM_011245326.4"/>
</dbReference>
<dbReference type="PDB" id="2Q7N">
    <property type="method" value="X-ray"/>
    <property type="resolution" value="4.00 A"/>
    <property type="chains" value="A/C=50-529"/>
</dbReference>
<dbReference type="PDBsum" id="2Q7N"/>
<dbReference type="SMR" id="P42703"/>
<dbReference type="BioGRID" id="201163">
    <property type="interactions" value="9"/>
</dbReference>
<dbReference type="DIP" id="DIP-5772N"/>
<dbReference type="FunCoup" id="P42703">
    <property type="interactions" value="386"/>
</dbReference>
<dbReference type="IntAct" id="P42703">
    <property type="interactions" value="2"/>
</dbReference>
<dbReference type="STRING" id="10090.ENSMUSP00000126137"/>
<dbReference type="GlyConnect" id="2478">
    <property type="glycosylation" value="4 N-Linked glycans (3 sites)"/>
</dbReference>
<dbReference type="GlyCosmos" id="P42703">
    <property type="glycosylation" value="16 sites, 4 glycans"/>
</dbReference>
<dbReference type="GlyGen" id="P42703">
    <property type="glycosylation" value="17 sites, 11 N-linked glycans (8 sites)"/>
</dbReference>
<dbReference type="iPTMnet" id="P42703"/>
<dbReference type="PhosphoSitePlus" id="P42703"/>
<dbReference type="SwissPalm" id="P42703"/>
<dbReference type="CPTAC" id="non-CPTAC-3515"/>
<dbReference type="jPOST" id="P42703"/>
<dbReference type="PaxDb" id="10090-ENSMUSP00000126137"/>
<dbReference type="PeptideAtlas" id="P42703"/>
<dbReference type="ProteomicsDB" id="286197">
    <molecule id="P42703-1"/>
</dbReference>
<dbReference type="ProteomicsDB" id="286198">
    <molecule id="P42703-2"/>
</dbReference>
<dbReference type="Pumba" id="P42703"/>
<dbReference type="Antibodypedia" id="4137">
    <property type="antibodies" value="459 antibodies from 31 providers"/>
</dbReference>
<dbReference type="DNASU" id="16880"/>
<dbReference type="Ensembl" id="ENSMUST00000067190.12">
    <molecule id="P42703-1"/>
    <property type="protein sequence ID" value="ENSMUSP00000064551.6"/>
    <property type="gene ID" value="ENSMUSG00000054263.13"/>
</dbReference>
<dbReference type="Ensembl" id="ENSMUST00000164529.9">
    <molecule id="P42703-2"/>
    <property type="protein sequence ID" value="ENSMUSP00000131434.2"/>
    <property type="gene ID" value="ENSMUSG00000054263.13"/>
</dbReference>
<dbReference type="Ensembl" id="ENSMUST00000171588.2">
    <molecule id="P42703-1"/>
    <property type="protein sequence ID" value="ENSMUSP00000126137.2"/>
    <property type="gene ID" value="ENSMUSG00000054263.13"/>
</dbReference>
<dbReference type="Ensembl" id="ENSMUST00000226471.2">
    <molecule id="P42703-1"/>
    <property type="protein sequence ID" value="ENSMUSP00000154750.2"/>
    <property type="gene ID" value="ENSMUSG00000054263.13"/>
</dbReference>
<dbReference type="Ensembl" id="ENSMUST00000226934.2">
    <molecule id="P42703-2"/>
    <property type="protein sequence ID" value="ENSMUSP00000153968.2"/>
    <property type="gene ID" value="ENSMUSG00000054263.13"/>
</dbReference>
<dbReference type="Ensembl" id="ENSMUST00000227727.2">
    <molecule id="P42703-2"/>
    <property type="protein sequence ID" value="ENSMUSP00000154181.2"/>
    <property type="gene ID" value="ENSMUSG00000054263.13"/>
</dbReference>
<dbReference type="GeneID" id="16880"/>
<dbReference type="KEGG" id="mmu:16880"/>
<dbReference type="UCSC" id="uc007vdw.2">
    <molecule id="P42703-2"/>
    <property type="organism name" value="mouse"/>
</dbReference>
<dbReference type="UCSC" id="uc007vdx.2">
    <molecule id="P42703-1"/>
    <property type="organism name" value="mouse"/>
</dbReference>
<dbReference type="AGR" id="MGI:96788"/>
<dbReference type="CTD" id="3977"/>
<dbReference type="MGI" id="MGI:96788">
    <property type="gene designation" value="Lifr"/>
</dbReference>
<dbReference type="VEuPathDB" id="HostDB:ENSMUSG00000054263"/>
<dbReference type="eggNOG" id="ENOG502QQF6">
    <property type="taxonomic scope" value="Eukaryota"/>
</dbReference>
<dbReference type="GeneTree" id="ENSGT00940000155776"/>
<dbReference type="HOGENOM" id="CLU_283805_0_0_1"/>
<dbReference type="InParanoid" id="P42703"/>
<dbReference type="OMA" id="FFLYGCK"/>
<dbReference type="OrthoDB" id="6382334at2759"/>
<dbReference type="PhylomeDB" id="P42703"/>
<dbReference type="TreeFam" id="TF338122"/>
<dbReference type="Reactome" id="R-MMU-6788467">
    <property type="pathway name" value="IL-6-type cytokine receptor ligand interactions"/>
</dbReference>
<dbReference type="BioGRID-ORCS" id="16880">
    <property type="hits" value="3 hits in 78 CRISPR screens"/>
</dbReference>
<dbReference type="ChiTaRS" id="Lifr">
    <property type="organism name" value="mouse"/>
</dbReference>
<dbReference type="EvolutionaryTrace" id="P42703"/>
<dbReference type="PRO" id="PR:P42703"/>
<dbReference type="Proteomes" id="UP000000589">
    <property type="component" value="Chromosome 15"/>
</dbReference>
<dbReference type="RNAct" id="P42703">
    <property type="molecule type" value="protein"/>
</dbReference>
<dbReference type="Bgee" id="ENSMUSG00000054263">
    <property type="expression patterns" value="Expressed in diaphysis of femur and 289 other cell types or tissues"/>
</dbReference>
<dbReference type="ExpressionAtlas" id="P42703">
    <property type="expression patterns" value="baseline and differential"/>
</dbReference>
<dbReference type="GO" id="GO:0005576">
    <property type="term" value="C:extracellular region"/>
    <property type="evidence" value="ECO:0007669"/>
    <property type="project" value="UniProtKB-SubCell"/>
</dbReference>
<dbReference type="GO" id="GO:0005886">
    <property type="term" value="C:plasma membrane"/>
    <property type="evidence" value="ECO:0007669"/>
    <property type="project" value="UniProtKB-SubCell"/>
</dbReference>
<dbReference type="GO" id="GO:0043235">
    <property type="term" value="C:receptor complex"/>
    <property type="evidence" value="ECO:0007669"/>
    <property type="project" value="Ensembl"/>
</dbReference>
<dbReference type="GO" id="GO:0005127">
    <property type="term" value="F:ciliary neurotrophic factor receptor binding"/>
    <property type="evidence" value="ECO:0007669"/>
    <property type="project" value="Ensembl"/>
</dbReference>
<dbReference type="GO" id="GO:0019838">
    <property type="term" value="F:growth factor binding"/>
    <property type="evidence" value="ECO:0007669"/>
    <property type="project" value="Ensembl"/>
</dbReference>
<dbReference type="GO" id="GO:0004923">
    <property type="term" value="F:leukemia inhibitory factor receptor activity"/>
    <property type="evidence" value="ECO:0000266"/>
    <property type="project" value="MGI"/>
</dbReference>
<dbReference type="GO" id="GO:0004924">
    <property type="term" value="F:oncostatin-M receptor activity"/>
    <property type="evidence" value="ECO:0007669"/>
    <property type="project" value="Ensembl"/>
</dbReference>
<dbReference type="GO" id="GO:0019221">
    <property type="term" value="P:cytokine-mediated signaling pathway"/>
    <property type="evidence" value="ECO:0000266"/>
    <property type="project" value="MGI"/>
</dbReference>
<dbReference type="GO" id="GO:0008284">
    <property type="term" value="P:positive regulation of cell population proliferation"/>
    <property type="evidence" value="ECO:0000316"/>
    <property type="project" value="MGI"/>
</dbReference>
<dbReference type="CDD" id="cd00063">
    <property type="entry name" value="FN3"/>
    <property type="match status" value="3"/>
</dbReference>
<dbReference type="FunFam" id="2.60.40.10:FF:000578">
    <property type="entry name" value="Leukemia inhibitory factor receptor"/>
    <property type="match status" value="1"/>
</dbReference>
<dbReference type="FunFam" id="2.60.40.10:FF:000607">
    <property type="entry name" value="Leukemia inhibitory factor receptor"/>
    <property type="match status" value="1"/>
</dbReference>
<dbReference type="FunFam" id="2.60.40.10:FF:000657">
    <property type="entry name" value="Leukemia inhibitory factor receptor"/>
    <property type="match status" value="1"/>
</dbReference>
<dbReference type="FunFam" id="2.60.40.10:FF:000738">
    <property type="entry name" value="Leukemia inhibitory factor receptor"/>
    <property type="match status" value="1"/>
</dbReference>
<dbReference type="FunFam" id="2.60.40.10:FF:000808">
    <property type="entry name" value="Leukemia inhibitory factor receptor"/>
    <property type="match status" value="1"/>
</dbReference>
<dbReference type="FunFam" id="2.60.40.10:FF:001265">
    <property type="entry name" value="Leukemia inhibitory factor receptor"/>
    <property type="match status" value="1"/>
</dbReference>
<dbReference type="FunFam" id="2.60.40.10:FF:001011">
    <property type="entry name" value="leukemia inhibitory factor receptor"/>
    <property type="match status" value="1"/>
</dbReference>
<dbReference type="FunFam" id="2.60.40.10:FF:001124">
    <property type="entry name" value="leukemia inhibitory factor receptor"/>
    <property type="match status" value="1"/>
</dbReference>
<dbReference type="Gene3D" id="2.60.40.10">
    <property type="entry name" value="Immunoglobulins"/>
    <property type="match status" value="8"/>
</dbReference>
<dbReference type="InterPro" id="IPR003961">
    <property type="entry name" value="FN3_dom"/>
</dbReference>
<dbReference type="InterPro" id="IPR036116">
    <property type="entry name" value="FN3_sf"/>
</dbReference>
<dbReference type="InterPro" id="IPR003529">
    <property type="entry name" value="Hematopoietin_rcpt_Gp130_CS"/>
</dbReference>
<dbReference type="InterPro" id="IPR013783">
    <property type="entry name" value="Ig-like_fold"/>
</dbReference>
<dbReference type="InterPro" id="IPR048497">
    <property type="entry name" value="LIF-R-like_Ig-like"/>
</dbReference>
<dbReference type="InterPro" id="IPR040817">
    <property type="entry name" value="LIFR_D2"/>
</dbReference>
<dbReference type="InterPro" id="IPR040901">
    <property type="entry name" value="LIFR_N"/>
</dbReference>
<dbReference type="InterPro" id="IPR050379">
    <property type="entry name" value="Type-I_Cytokine_Rcpt"/>
</dbReference>
<dbReference type="PANTHER" id="PTHR23036">
    <property type="entry name" value="CYTOKINE RECEPTOR"/>
    <property type="match status" value="1"/>
</dbReference>
<dbReference type="PANTHER" id="PTHR23036:SF105">
    <property type="entry name" value="LEUKEMIA INHIBITORY FACTOR RECEPTOR"/>
    <property type="match status" value="1"/>
</dbReference>
<dbReference type="Pfam" id="PF00041">
    <property type="entry name" value="fn3"/>
    <property type="match status" value="1"/>
</dbReference>
<dbReference type="Pfam" id="PF21177">
    <property type="entry name" value="LIF-R_Ig-like"/>
    <property type="match status" value="1"/>
</dbReference>
<dbReference type="Pfam" id="PF17971">
    <property type="entry name" value="LIFR_D2"/>
    <property type="match status" value="1"/>
</dbReference>
<dbReference type="Pfam" id="PF18207">
    <property type="entry name" value="LIFR_N"/>
    <property type="match status" value="1"/>
</dbReference>
<dbReference type="SMART" id="SM00060">
    <property type="entry name" value="FN3"/>
    <property type="match status" value="5"/>
</dbReference>
<dbReference type="SUPFAM" id="SSF49265">
    <property type="entry name" value="Fibronectin type III"/>
    <property type="match status" value="3"/>
</dbReference>
<dbReference type="PROSITE" id="PS50853">
    <property type="entry name" value="FN3"/>
    <property type="match status" value="4"/>
</dbReference>
<dbReference type="PROSITE" id="PS01353">
    <property type="entry name" value="HEMATOPO_REC_L_F2"/>
    <property type="match status" value="1"/>
</dbReference>
<gene>
    <name type="primary">Lifr</name>
</gene>
<accession>P42703</accession>
<accession>Q5I0Y2</accession>
<evidence type="ECO:0000250" key="1"/>
<evidence type="ECO:0000250" key="2">
    <source>
        <dbReference type="UniProtKB" id="P42702"/>
    </source>
</evidence>
<evidence type="ECO:0000255" key="3"/>
<evidence type="ECO:0000255" key="4">
    <source>
        <dbReference type="PROSITE-ProRule" id="PRU00316"/>
    </source>
</evidence>
<evidence type="ECO:0000256" key="5">
    <source>
        <dbReference type="SAM" id="MobiDB-lite"/>
    </source>
</evidence>
<evidence type="ECO:0000269" key="6">
    <source>
    </source>
</evidence>
<evidence type="ECO:0000269" key="7">
    <source>
    </source>
</evidence>
<evidence type="ECO:0000269" key="8">
    <source>
    </source>
</evidence>
<evidence type="ECO:0000269" key="9">
    <source>
    </source>
</evidence>
<evidence type="ECO:0000303" key="10">
    <source>
    </source>
</evidence>
<evidence type="ECO:0000303" key="11">
    <source>
    </source>
</evidence>
<evidence type="ECO:0000303" key="12">
    <source>
    </source>
</evidence>
<evidence type="ECO:0000303" key="13">
    <source>
    </source>
</evidence>
<evidence type="ECO:0000305" key="14"/>
<evidence type="ECO:0007744" key="15">
    <source>
    </source>
</evidence>
<protein>
    <recommendedName>
        <fullName>Leukemia inhibitory factor receptor</fullName>
        <shortName>LIF receptor</shortName>
        <shortName>LIF-R</shortName>
    </recommendedName>
    <alternativeName>
        <fullName>D-factor/LIF receptor</fullName>
    </alternativeName>
    <cdAntigenName>CD118</cdAntigenName>
</protein>
<feature type="signal peptide" evidence="3">
    <location>
        <begin position="1"/>
        <end position="43"/>
    </location>
</feature>
<feature type="chain" id="PRO_0000010903" description="Leukemia inhibitory factor receptor">
    <location>
        <begin position="44"/>
        <end position="1092"/>
    </location>
</feature>
<feature type="topological domain" description="Extracellular" evidence="3">
    <location>
        <begin position="44"/>
        <end position="828"/>
    </location>
</feature>
<feature type="transmembrane region" description="Helical" evidence="3">
    <location>
        <begin position="829"/>
        <end position="853"/>
    </location>
</feature>
<feature type="topological domain" description="Cytoplasmic" evidence="3">
    <location>
        <begin position="854"/>
        <end position="1092"/>
    </location>
</feature>
<feature type="domain" description="Fibronectin type-III 1" evidence="4">
    <location>
        <begin position="45"/>
        <end position="126"/>
    </location>
</feature>
<feature type="domain" description="Fibronectin type-III 2" evidence="4">
    <location>
        <begin position="330"/>
        <end position="429"/>
    </location>
</feature>
<feature type="domain" description="Fibronectin type-III 3" evidence="4">
    <location>
        <begin position="430"/>
        <end position="529"/>
    </location>
</feature>
<feature type="domain" description="Fibronectin type-III 4" evidence="4">
    <location>
        <begin position="533"/>
        <end position="624"/>
    </location>
</feature>
<feature type="domain" description="Fibronectin type-III 5" evidence="4">
    <location>
        <begin position="622"/>
        <end position="714"/>
    </location>
</feature>
<feature type="domain" description="Fibronectin type-III 6" evidence="4">
    <location>
        <begin position="719"/>
        <end position="828"/>
    </location>
</feature>
<feature type="region of interest" description="Disordered" evidence="5">
    <location>
        <begin position="1009"/>
        <end position="1092"/>
    </location>
</feature>
<feature type="short sequence motif" description="WSXWS motif">
    <location>
        <begin position="514"/>
        <end position="518"/>
    </location>
</feature>
<feature type="short sequence motif" description="Box 1 motif">
    <location>
        <begin position="864"/>
        <end position="872"/>
    </location>
</feature>
<feature type="compositionally biased region" description="Polar residues" evidence="5">
    <location>
        <begin position="1027"/>
        <end position="1062"/>
    </location>
</feature>
<feature type="compositionally biased region" description="Polar residues" evidence="5">
    <location>
        <begin position="1081"/>
        <end position="1092"/>
    </location>
</feature>
<feature type="modified residue" description="Phosphoserine" evidence="2">
    <location>
        <position position="922"/>
    </location>
</feature>
<feature type="modified residue" description="Phosphoserine" evidence="15">
    <location>
        <position position="1039"/>
    </location>
</feature>
<feature type="glycosylation site" description="N-linked (GlcNAc...) asparagine" evidence="8">
    <location>
        <position position="164"/>
    </location>
</feature>
<feature type="glycosylation site" description="N-linked (GlcNAc...) asparagine" evidence="8">
    <location>
        <position position="199"/>
    </location>
</feature>
<feature type="glycosylation site" description="N-linked (GlcNAc...) asparagine" evidence="8">
    <location>
        <position position="238"/>
    </location>
</feature>
<feature type="glycosylation site" description="N-linked (GlcNAc...) asparagine" evidence="8">
    <location>
        <position position="261"/>
    </location>
</feature>
<feature type="glycosylation site" description="N-linked (GlcNAc...) asparagine" evidence="6 7 8 9">
    <location>
        <position position="385"/>
    </location>
</feature>
<feature type="glycosylation site" description="N-linked (GlcNAc...) asparagine" evidence="6 8">
    <location>
        <position position="402"/>
    </location>
</feature>
<feature type="glycosylation site" description="N-linked (GlcNAc...) asparagine" evidence="8">
    <location>
        <position position="421"/>
    </location>
</feature>
<feature type="glycosylation site" description="N-linked (GlcNAc...) asparagine" evidence="8">
    <location>
        <position position="440"/>
    </location>
</feature>
<feature type="glycosylation site" description="N-linked (GlcNAc...) asparagine" evidence="8">
    <location>
        <position position="453"/>
    </location>
</feature>
<feature type="glycosylation site" description="N-linked (GlcNAc...) asparagine" evidence="3">
    <location>
        <position position="476"/>
    </location>
</feature>
<feature type="glycosylation site" description="N-linked (GlcNAc...) asparagine" evidence="3">
    <location>
        <position position="567"/>
    </location>
</feature>
<feature type="glycosylation site" description="N-linked (GlcNAc...) asparagine" evidence="3">
    <location>
        <position position="647"/>
    </location>
</feature>
<feature type="glycosylation site" description="N-linked (GlcNAc...) asparagine" evidence="7">
    <location>
        <position position="658"/>
    </location>
</feature>
<feature type="glycosylation site" description="N-linked (GlcNAc...) asparagine" evidence="6">
    <location>
        <position position="675"/>
    </location>
</feature>
<feature type="glycosylation site" description="N-linked (GlcNAc...) asparagine" evidence="3">
    <location>
        <position position="724"/>
    </location>
</feature>
<feature type="glycosylation site" description="N-linked (GlcNAc...) asparagine" evidence="3">
    <location>
        <position position="782"/>
    </location>
</feature>
<feature type="disulfide bond" evidence="8">
    <location>
        <begin position="53"/>
        <end position="63"/>
    </location>
</feature>
<feature type="disulfide bond" evidence="8">
    <location>
        <begin position="80"/>
        <end position="88"/>
    </location>
</feature>
<feature type="disulfide bond" evidence="8">
    <location>
        <begin position="208"/>
        <end position="265"/>
    </location>
</feature>
<feature type="disulfide bond" evidence="8">
    <location>
        <begin position="336"/>
        <end position="346"/>
    </location>
</feature>
<feature type="disulfide bond" evidence="8">
    <location>
        <begin position="461"/>
        <end position="506"/>
    </location>
</feature>
<feature type="splice variant" id="VSP_001686" description="In isoform 2." evidence="10 11 12 13">
    <original>AP</original>
    <variation>EA</variation>
    <location>
        <begin position="718"/>
        <end position="719"/>
    </location>
</feature>
<feature type="splice variant" id="VSP_001687" description="In isoform 2." evidence="10 11 12 13">
    <location>
        <begin position="720"/>
        <end position="1092"/>
    </location>
</feature>
<reference key="1">
    <citation type="journal article" date="1991" name="EMBO J.">
        <title>Leukemia inhibitory factor receptor is structurally related to the IL-6 signal transducer, gp130.</title>
        <authorList>
            <person name="Gearing D.P."/>
            <person name="Thut C.J."/>
            <person name="Vanden Bos T."/>
            <person name="Gimpel S.D."/>
            <person name="Delaney P.B."/>
            <person name="King J."/>
            <person name="Price V."/>
            <person name="Cosman D."/>
            <person name="Beckmann M.P."/>
        </authorList>
    </citation>
    <scope>NUCLEOTIDE SEQUENCE [MRNA] (ISOFORM 2)</scope>
</reference>
<reference key="2">
    <citation type="journal article" date="1993" name="FEBS Lett.">
        <title>Pregnancy associated increase in mRNA for soluble D-factor/LIF receptor in mouse liver.</title>
        <authorList>
            <person name="Tomida M."/>
            <person name="Yamamoto-Yamaguchi Y."/>
            <person name="Hozumi M."/>
        </authorList>
    </citation>
    <scope>NUCLEOTIDE SEQUENCE [MRNA] (ISOFORM 2)</scope>
    <source>
        <strain>ICR</strain>
        <tissue>Liver</tissue>
    </source>
</reference>
<reference key="3">
    <citation type="journal article" date="1994" name="J. Biochem.">
        <title>Three different cDNAs encoding mouse D-factor/LIF receptor.</title>
        <authorList>
            <person name="Tomida M."/>
            <person name="Yamamoto-Yamaguchi Y."/>
            <person name="Hozumi M."/>
        </authorList>
    </citation>
    <scope>NUCLEOTIDE SEQUENCE [MRNA] (ISOFORMS 1 AND 2)</scope>
</reference>
<reference key="4">
    <citation type="journal article" date="2004" name="Genome Res.">
        <title>The status, quality, and expansion of the NIH full-length cDNA project: the Mammalian Gene Collection (MGC).</title>
        <authorList>
            <consortium name="The MGC Project Team"/>
        </authorList>
    </citation>
    <scope>NUCLEOTIDE SEQUENCE [LARGE SCALE MRNA] (ISOFORM 2)</scope>
    <source>
        <strain>FVB/N</strain>
        <tissue>Liver</tissue>
    </source>
</reference>
<reference key="5">
    <citation type="journal article" date="2006" name="J. Proteome Res.">
        <title>Proteome-wide characterization of N-glycosylation events by diagonal chromatography.</title>
        <authorList>
            <person name="Ghesquiere B."/>
            <person name="Van Damme J."/>
            <person name="Martens L."/>
            <person name="Vandekerckhove J."/>
            <person name="Gevaert K."/>
        </authorList>
    </citation>
    <scope>GLYCOSYLATION [LARGE SCALE ANALYSIS] AT ASN-385; ASN-402 AND ASN-675</scope>
    <source>
        <strain>C57BL/6J</strain>
        <tissue>Plasma</tissue>
    </source>
</reference>
<reference key="6">
    <citation type="journal article" date="2007" name="J. Proteome Res.">
        <title>Enhanced analysis of the mouse plasma proteome using cysteine-containing tryptic glycopeptides.</title>
        <authorList>
            <person name="Bernhard O.K."/>
            <person name="Kapp E.A."/>
            <person name="Simpson R.J."/>
        </authorList>
    </citation>
    <scope>GLYCOSYLATION [LARGE SCALE ANALYSIS] AT ASN-385 AND ASN-658</scope>
    <source>
        <strain>C57BL/6J</strain>
        <tissue>Plasma</tissue>
    </source>
</reference>
<reference key="7">
    <citation type="journal article" date="2009" name="Nat. Biotechnol.">
        <title>Mass-spectrometric identification and relative quantification of N-linked cell surface glycoproteins.</title>
        <authorList>
            <person name="Wollscheid B."/>
            <person name="Bausch-Fluck D."/>
            <person name="Henderson C."/>
            <person name="O'Brien R."/>
            <person name="Bibel M."/>
            <person name="Schiess R."/>
            <person name="Aebersold R."/>
            <person name="Watts J.D."/>
        </authorList>
    </citation>
    <scope>GLYCOSYLATION [LARGE SCALE ANALYSIS] AT ASN-385</scope>
</reference>
<reference key="8">
    <citation type="journal article" date="2010" name="Cell">
        <title>A tissue-specific atlas of mouse protein phosphorylation and expression.</title>
        <authorList>
            <person name="Huttlin E.L."/>
            <person name="Jedrychowski M.P."/>
            <person name="Elias J.E."/>
            <person name="Goswami T."/>
            <person name="Rad R."/>
            <person name="Beausoleil S.A."/>
            <person name="Villen J."/>
            <person name="Haas W."/>
            <person name="Sowa M.E."/>
            <person name="Gygi S.P."/>
        </authorList>
    </citation>
    <scope>PHOSPHORYLATION [LARGE SCALE ANALYSIS] AT SER-1039</scope>
    <scope>IDENTIFICATION BY MASS SPECTROMETRY [LARGE SCALE ANALYSIS]</scope>
    <source>
        <tissue>Brain</tissue>
        <tissue>Brown adipose tissue</tissue>
        <tissue>Heart</tissue>
        <tissue>Kidney</tissue>
        <tissue>Liver</tissue>
        <tissue>Lung</tissue>
        <tissue>Pancreas</tissue>
        <tissue>Spleen</tissue>
        <tissue>Testis</tissue>
    </source>
</reference>
<reference key="9">
    <citation type="journal article" date="2007" name="Proc. Natl. Acad. Sci. U.S.A.">
        <title>An unusual cytokine:Ig-domain interaction revealed in the crystal structure of leukemia inhibitory factor (LIF) in complex with the LIF receptor.</title>
        <authorList>
            <person name="Huyton T."/>
            <person name="Zhang J.G."/>
            <person name="Luo C.S."/>
            <person name="Lou M.Z."/>
            <person name="Hilton D.J."/>
            <person name="Nicola N.A."/>
            <person name="Garrett T.P."/>
        </authorList>
    </citation>
    <scope>X-RAY CRYSTALLOGRAPHY (4.0 ANGSTROMS) OF 49-529 IN COMPLEX WITH HUMAN LIF</scope>
    <scope>DISULFIDE BOND</scope>
    <scope>GLYCOSYLATION AT ASN-164; ASN-199; ASN-238; ASN-261; ASN-385; ASN-402; ASN-421; ASN-440 AND ASN-453</scope>
</reference>
<keyword id="KW-0002">3D-structure</keyword>
<keyword id="KW-0025">Alternative splicing</keyword>
<keyword id="KW-1003">Cell membrane</keyword>
<keyword id="KW-1015">Disulfide bond</keyword>
<keyword id="KW-0325">Glycoprotein</keyword>
<keyword id="KW-0472">Membrane</keyword>
<keyword id="KW-0597">Phosphoprotein</keyword>
<keyword id="KW-0675">Receptor</keyword>
<keyword id="KW-1185">Reference proteome</keyword>
<keyword id="KW-0677">Repeat</keyword>
<keyword id="KW-0964">Secreted</keyword>
<keyword id="KW-0732">Signal</keyword>
<keyword id="KW-0812">Transmembrane</keyword>
<keyword id="KW-1133">Transmembrane helix</keyword>
<sequence length="1092" mass="122574">MAAYSWWRQPSWMVDNKRSRMTPNLPWLLSALTLLHLTMHANGLKRGVQDLKCTTNNMRVWDCTWPAPLGVSPGTVKDICIKDRFHSCHPLETTNVKIPALSPGDHEVTINYLNGFQSKFTLNEKDVSLIPETPEILDLSADFFTSSLLLKWNDRGSALPHPSNATWEIKVLQNPRTEPVALVLLNTMLSGKDTVQHWNWTSDLPLQCATHSVSIRWHIDSPHFSGYKEWSDWSPLKNISWIRNTETNVFPQDKVVLAGSNMTICCMSPTKVLSGQIGNTLRPLIHLYGQTVAIHILNIPVSENSGTNIIFITDDDVYGTVVFAGYPPDVPQKLSCETHDLKEIICSWNPGRITGLVGPRNTEYTLFESISGKSAVFHRIEGLTNETYRLGVQMHPGQEIHNFTLTGRNPLGQAQSAVVINVTERVAPHDPTSLKVKDINSTVVTFSWYLPGNFTKINLLCQIEICKANSKKEVRNATIRGAEDSTYHVAVDKLNPYTAYTFRVRCSSKTFWKWSRWSDEKRHLTTEATPSKGPDTWREWSSDGKNLIVYWKPLPINEANGKILSYNVSCSLNEETQSVLEIFDPQHRAEIQLSKNDYIISVVARNSAGSSPPSKIASMEIPNDDITVEQAVGLGNRIFLTWRHDPNMTCDYVIKWCNSSRSEPCLLDWRKVPSNSTETVIESDQFQPGVRYNFYLYGCTNQGYQLLRSIIGYVEELAPIVAPNFTVEDTSADSILVKWDDIPVEELRGFLRGYLFYFQKGERDTPKTRSLEPHHSDIKLKNITDISQKTLRIADLQGKTSYHLVLRAYTHGGLGPEKSMFVVTKENSVGLIIAILIPVAVAVIVGVVTSILCYRKREWIKETFYPDIPNPENCKALQFQKSVCEGSNALKTLEMNPCTPNNVEVLESRSIVPKIEDTEIISPVAERPGERSEVDPENHVVVSYCPPIIEEEITNPAADEVGGASQVVYIDVQSMYQPQAKAEEEQDVDPVVVAGYKPQMRLPISPAVEDTAAEDEEGKTAGYRPQANVNTWNLVSPDSPRSTDSNNEVVSFGSPCSINSRQFLIPPKDEDSPKSNGGGWSFTNFFQNKPND</sequence>
<proteinExistence type="evidence at protein level"/>
<name>LIFR_MOUSE</name>
<comment type="function">
    <text>Signal-transducing molecule. May have a common pathway with IL6ST. The soluble form inhibits the biological activity of LIF by blocking its binding to receptors on target cells.</text>
</comment>
<comment type="subunit">
    <text evidence="1">Heterodimer composed of LIFR and IL6ST. The heterodimer formed by LIFR and IL6ST interacts with the complex formed by CNTF and CNTFR (By similarity).</text>
</comment>
<comment type="subcellular location">
    <molecule>Isoform 1</molecule>
    <subcellularLocation>
        <location>Cell membrane</location>
        <topology>Single-pass type I membrane protein</topology>
    </subcellularLocation>
</comment>
<comment type="subcellular location">
    <molecule>Isoform 2</molecule>
    <subcellularLocation>
        <location>Secreted</location>
    </subcellularLocation>
</comment>
<comment type="alternative products">
    <event type="alternative splicing"/>
    <isoform>
        <id>P42703-1</id>
        <name>1</name>
        <name>Membrane</name>
        <sequence type="displayed"/>
    </isoform>
    <isoform>
        <id>P42703-2</id>
        <name>2</name>
        <name>Secreted</name>
        <sequence type="described" ref="VSP_001686 VSP_001687"/>
    </isoform>
</comment>
<comment type="tissue specificity">
    <text>Placenta, liver, kidney, heart, lung, brain, and embryos. The liver may be the primary site of synthesis of the secreted form.</text>
</comment>
<comment type="domain">
    <text>The WSXWS motif appears to be necessary for proper protein folding and thereby efficient intracellular transport and cell-surface receptor binding.</text>
</comment>
<comment type="domain">
    <text>The box 1 motif is required for JAK interaction and/or activation.</text>
</comment>
<comment type="similarity">
    <text evidence="14">Belongs to the type I cytokine receptor family. Type 2 subfamily.</text>
</comment>
<organism>
    <name type="scientific">Mus musculus</name>
    <name type="common">Mouse</name>
    <dbReference type="NCBI Taxonomy" id="10090"/>
    <lineage>
        <taxon>Eukaryota</taxon>
        <taxon>Metazoa</taxon>
        <taxon>Chordata</taxon>
        <taxon>Craniata</taxon>
        <taxon>Vertebrata</taxon>
        <taxon>Euteleostomi</taxon>
        <taxon>Mammalia</taxon>
        <taxon>Eutheria</taxon>
        <taxon>Euarchontoglires</taxon>
        <taxon>Glires</taxon>
        <taxon>Rodentia</taxon>
        <taxon>Myomorpha</taxon>
        <taxon>Muroidea</taxon>
        <taxon>Muridae</taxon>
        <taxon>Murinae</taxon>
        <taxon>Mus</taxon>
        <taxon>Mus</taxon>
    </lineage>
</organism>